<keyword id="KW-0963">Cytoplasm</keyword>
<keyword id="KW-0227">DNA damage</keyword>
<keyword id="KW-0234">DNA repair</keyword>
<keyword id="KW-0235">DNA replication</keyword>
<keyword id="KW-0239">DNA-directed DNA polymerase</keyword>
<keyword id="KW-0548">Nucleotidyltransferase</keyword>
<keyword id="KW-0808">Transferase</keyword>
<evidence type="ECO:0000255" key="1">
    <source>
        <dbReference type="HAMAP-Rule" id="MF_01902"/>
    </source>
</evidence>
<protein>
    <recommendedName>
        <fullName evidence="1">Error-prone DNA polymerase</fullName>
        <ecNumber evidence="1">2.7.7.7</ecNumber>
    </recommendedName>
</protein>
<accession>Q87N39</accession>
<dbReference type="EC" id="2.7.7.7" evidence="1"/>
<dbReference type="EMBL" id="BA000031">
    <property type="protein sequence ID" value="BAC60299.1"/>
    <property type="molecule type" value="Genomic_DNA"/>
</dbReference>
<dbReference type="RefSeq" id="NP_798415.1">
    <property type="nucleotide sequence ID" value="NC_004603.1"/>
</dbReference>
<dbReference type="RefSeq" id="WP_005453944.1">
    <property type="nucleotide sequence ID" value="NC_004603.1"/>
</dbReference>
<dbReference type="SMR" id="Q87N39"/>
<dbReference type="GeneID" id="1189547"/>
<dbReference type="KEGG" id="vpa:VP2036"/>
<dbReference type="PATRIC" id="fig|223926.6.peg.1947"/>
<dbReference type="eggNOG" id="COG0587">
    <property type="taxonomic scope" value="Bacteria"/>
</dbReference>
<dbReference type="HOGENOM" id="CLU_001600_4_0_6"/>
<dbReference type="Proteomes" id="UP000002493">
    <property type="component" value="Chromosome 1"/>
</dbReference>
<dbReference type="GO" id="GO:0005737">
    <property type="term" value="C:cytoplasm"/>
    <property type="evidence" value="ECO:0007669"/>
    <property type="project" value="UniProtKB-SubCell"/>
</dbReference>
<dbReference type="GO" id="GO:0008408">
    <property type="term" value="F:3'-5' exonuclease activity"/>
    <property type="evidence" value="ECO:0007669"/>
    <property type="project" value="InterPro"/>
</dbReference>
<dbReference type="GO" id="GO:0003887">
    <property type="term" value="F:DNA-directed DNA polymerase activity"/>
    <property type="evidence" value="ECO:0007669"/>
    <property type="project" value="UniProtKB-UniRule"/>
</dbReference>
<dbReference type="GO" id="GO:0003676">
    <property type="term" value="F:nucleic acid binding"/>
    <property type="evidence" value="ECO:0007669"/>
    <property type="project" value="InterPro"/>
</dbReference>
<dbReference type="GO" id="GO:0006281">
    <property type="term" value="P:DNA repair"/>
    <property type="evidence" value="ECO:0007669"/>
    <property type="project" value="UniProtKB-UniRule"/>
</dbReference>
<dbReference type="GO" id="GO:0006260">
    <property type="term" value="P:DNA replication"/>
    <property type="evidence" value="ECO:0007669"/>
    <property type="project" value="UniProtKB-KW"/>
</dbReference>
<dbReference type="CDD" id="cd04485">
    <property type="entry name" value="DnaE_OBF"/>
    <property type="match status" value="1"/>
</dbReference>
<dbReference type="CDD" id="cd07434">
    <property type="entry name" value="PHP_PolIIIA_DnaE2"/>
    <property type="match status" value="1"/>
</dbReference>
<dbReference type="Gene3D" id="1.10.150.870">
    <property type="match status" value="1"/>
</dbReference>
<dbReference type="Gene3D" id="3.20.20.140">
    <property type="entry name" value="Metal-dependent hydrolases"/>
    <property type="match status" value="1"/>
</dbReference>
<dbReference type="Gene3D" id="2.40.50.140">
    <property type="entry name" value="Nucleic acid-binding proteins"/>
    <property type="match status" value="1"/>
</dbReference>
<dbReference type="HAMAP" id="MF_01902">
    <property type="entry name" value="DNApol_error_prone"/>
    <property type="match status" value="1"/>
</dbReference>
<dbReference type="InterPro" id="IPR011708">
    <property type="entry name" value="DNA_pol3_alpha_NTPase_dom"/>
</dbReference>
<dbReference type="InterPro" id="IPR040982">
    <property type="entry name" value="DNA_pol3_finger"/>
</dbReference>
<dbReference type="InterPro" id="IPR023073">
    <property type="entry name" value="DnaE2"/>
</dbReference>
<dbReference type="InterPro" id="IPR004805">
    <property type="entry name" value="DnaE2/DnaE/PolC"/>
</dbReference>
<dbReference type="InterPro" id="IPR029460">
    <property type="entry name" value="DNAPol_HHH"/>
</dbReference>
<dbReference type="InterPro" id="IPR012340">
    <property type="entry name" value="NA-bd_OB-fold"/>
</dbReference>
<dbReference type="InterPro" id="IPR004365">
    <property type="entry name" value="NA-bd_OB_tRNA"/>
</dbReference>
<dbReference type="InterPro" id="IPR004013">
    <property type="entry name" value="PHP_dom"/>
</dbReference>
<dbReference type="InterPro" id="IPR003141">
    <property type="entry name" value="Pol/His_phosphatase_N"/>
</dbReference>
<dbReference type="NCBIfam" id="TIGR00594">
    <property type="entry name" value="polc"/>
    <property type="match status" value="1"/>
</dbReference>
<dbReference type="NCBIfam" id="NF004225">
    <property type="entry name" value="PRK05672.1"/>
    <property type="match status" value="1"/>
</dbReference>
<dbReference type="PANTHER" id="PTHR32294">
    <property type="entry name" value="DNA POLYMERASE III SUBUNIT ALPHA"/>
    <property type="match status" value="1"/>
</dbReference>
<dbReference type="PANTHER" id="PTHR32294:SF4">
    <property type="entry name" value="ERROR-PRONE DNA POLYMERASE"/>
    <property type="match status" value="1"/>
</dbReference>
<dbReference type="Pfam" id="PF07733">
    <property type="entry name" value="DNA_pol3_alpha"/>
    <property type="match status" value="1"/>
</dbReference>
<dbReference type="Pfam" id="PF17657">
    <property type="entry name" value="DNA_pol3_finger"/>
    <property type="match status" value="1"/>
</dbReference>
<dbReference type="Pfam" id="PF14579">
    <property type="entry name" value="HHH_6"/>
    <property type="match status" value="1"/>
</dbReference>
<dbReference type="Pfam" id="PF02811">
    <property type="entry name" value="PHP"/>
    <property type="match status" value="1"/>
</dbReference>
<dbReference type="Pfam" id="PF01336">
    <property type="entry name" value="tRNA_anti-codon"/>
    <property type="match status" value="1"/>
</dbReference>
<dbReference type="SMART" id="SM00481">
    <property type="entry name" value="POLIIIAc"/>
    <property type="match status" value="1"/>
</dbReference>
<sequence length="1024" mass="117105">MSYAELFCQSNFSFLTGASHAEELVLQAAFYRYHAIAITDECSVAGVVKAHATIEQHKLDIKQIVGSMFWLNEECQIVLLCPCRKAYAEMCRIITNARRRSEKGSYQLSEWDLMSIRHCLVLWLPTHQASDHYWGRWLNQHHNNRLWVAIQRHLGGDDDAYTNHCEKLAHELQQPITACGGVLMHTAERLPLQHILTAIKHGCSVDQLGFERLSNAERALRPLNKLVRIYKPEWLEESKYIADLCEFKLSDLKYEYPTELIPNGYTPNSYLRMLVEQGKERRFPEGVPEDINQTIENELRLIEDLKYHYYFLTIHDIVMFAKQQGILYQGRGSAANSVVCYCLEITAVDPRQISVLFERFISKERKEPPDIDVDFEHERREEVIQYIYKKYGRERAALAATVISYRFKSAVREVGKALGIEETQLDFFIKNVNRRDRSQGWQAQIIELGLQPESLKGQQFIQLVNEIIGFPRHLSQHVGGFVISSGPLYELVPVENAAMEDRTIIQWDKDDLESLELLKVDVLALGMLNAIRKCFQLIEKHHQRSLSIAEITRRQDDPHVYRMLQKADTVGVFQIESRAQMSMLPRLKPACYYDLVIQIAIVRPGPIQGDMVHPFLKRRNGEEPVSYPSEAVKSVLERTMGVPIFQEQVIKLAMVAAGFSGGEADQLRRAMASWKKNGDLAKFKPKLLNGMQERGYDLAFAERIFEQICGFGEYGFPESHSASFAVLAYCSAWLKYYYPAEFYTALLNSQPMGFYSPSQLVQDARRHGVEVLPICVNHSYYQHHLIQRPNGRLGVQLGFRLVKGFNEEGATRLVERRPKTGYHSIQEVKQILRSRRDIELLASANAFQILSGNRYNARWAAMDSLSDLPLFHHIEEPSVGYQVQPSEYESLIEDYASTGLSLNRHPITLLEEAGILPRFTRMKQLVDKEHKSLVTVAGVVTGRQSPGTAAGVTFFTLEDDTGNINVVVWSATARAQKQAYLTSKILMVKGILEREGEVIHVIAGKLIDCTHYLSNLQSKSRDFH</sequence>
<proteinExistence type="inferred from homology"/>
<feature type="chain" id="PRO_0000103401" description="Error-prone DNA polymerase">
    <location>
        <begin position="1"/>
        <end position="1024"/>
    </location>
</feature>
<organism>
    <name type="scientific">Vibrio parahaemolyticus serotype O3:K6 (strain RIMD 2210633)</name>
    <dbReference type="NCBI Taxonomy" id="223926"/>
    <lineage>
        <taxon>Bacteria</taxon>
        <taxon>Pseudomonadati</taxon>
        <taxon>Pseudomonadota</taxon>
        <taxon>Gammaproteobacteria</taxon>
        <taxon>Vibrionales</taxon>
        <taxon>Vibrionaceae</taxon>
        <taxon>Vibrio</taxon>
    </lineage>
</organism>
<reference key="1">
    <citation type="journal article" date="2003" name="Lancet">
        <title>Genome sequence of Vibrio parahaemolyticus: a pathogenic mechanism distinct from that of V. cholerae.</title>
        <authorList>
            <person name="Makino K."/>
            <person name="Oshima K."/>
            <person name="Kurokawa K."/>
            <person name="Yokoyama K."/>
            <person name="Uda T."/>
            <person name="Tagomori K."/>
            <person name="Iijima Y."/>
            <person name="Najima M."/>
            <person name="Nakano M."/>
            <person name="Yamashita A."/>
            <person name="Kubota Y."/>
            <person name="Kimura S."/>
            <person name="Yasunaga T."/>
            <person name="Honda T."/>
            <person name="Shinagawa H."/>
            <person name="Hattori M."/>
            <person name="Iida T."/>
        </authorList>
    </citation>
    <scope>NUCLEOTIDE SEQUENCE [LARGE SCALE GENOMIC DNA]</scope>
    <source>
        <strain>RIMD 2210633</strain>
    </source>
</reference>
<name>DNAE2_VIBPA</name>
<comment type="function">
    <text evidence="1">DNA polymerase involved in damage-induced mutagenesis and translesion synthesis (TLS). It is not the major replicative DNA polymerase.</text>
</comment>
<comment type="catalytic activity">
    <reaction evidence="1">
        <text>DNA(n) + a 2'-deoxyribonucleoside 5'-triphosphate = DNA(n+1) + diphosphate</text>
        <dbReference type="Rhea" id="RHEA:22508"/>
        <dbReference type="Rhea" id="RHEA-COMP:17339"/>
        <dbReference type="Rhea" id="RHEA-COMP:17340"/>
        <dbReference type="ChEBI" id="CHEBI:33019"/>
        <dbReference type="ChEBI" id="CHEBI:61560"/>
        <dbReference type="ChEBI" id="CHEBI:173112"/>
        <dbReference type="EC" id="2.7.7.7"/>
    </reaction>
</comment>
<comment type="subcellular location">
    <subcellularLocation>
        <location evidence="1">Cytoplasm</location>
    </subcellularLocation>
</comment>
<comment type="similarity">
    <text evidence="1">Belongs to the DNA polymerase type-C family. DnaE2 subfamily.</text>
</comment>
<gene>
    <name evidence="1" type="primary">dnaE2</name>
    <name type="ordered locus">VP2036</name>
</gene>